<proteinExistence type="inferred from homology"/>
<comment type="function">
    <text evidence="1">Catalyzes the phosphorylation of riboflavin (vitamin B2) to form flavin mononucleotide (FMN) coenzyme.</text>
</comment>
<comment type="catalytic activity">
    <reaction>
        <text>riboflavin + ATP = FMN + ADP + H(+)</text>
        <dbReference type="Rhea" id="RHEA:14357"/>
        <dbReference type="ChEBI" id="CHEBI:15378"/>
        <dbReference type="ChEBI" id="CHEBI:30616"/>
        <dbReference type="ChEBI" id="CHEBI:57986"/>
        <dbReference type="ChEBI" id="CHEBI:58210"/>
        <dbReference type="ChEBI" id="CHEBI:456216"/>
        <dbReference type="EC" id="2.7.1.26"/>
    </reaction>
</comment>
<comment type="cofactor">
    <cofactor evidence="1">
        <name>Zn(2+)</name>
        <dbReference type="ChEBI" id="CHEBI:29105"/>
    </cofactor>
    <cofactor evidence="1">
        <name>Mg(2+)</name>
        <dbReference type="ChEBI" id="CHEBI:18420"/>
    </cofactor>
    <text evidence="1">Zinc or magnesium.</text>
</comment>
<comment type="pathway">
    <text>Cofactor biosynthesis; FMN biosynthesis; FMN from riboflavin (ATP route): step 1/1.</text>
</comment>
<comment type="similarity">
    <text evidence="4">Belongs to the flavokinase family.</text>
</comment>
<comment type="sequence caution" evidence="4">
    <conflict type="erroneous gene model prediction">
        <sequence resource="EMBL-CDS" id="CAF06137"/>
    </conflict>
</comment>
<protein>
    <recommendedName>
        <fullName>Riboflavin kinase</fullName>
        <ecNumber>2.7.1.26</ecNumber>
    </recommendedName>
    <alternativeName>
        <fullName>Flavin mononucleotide kinase 1</fullName>
    </alternativeName>
</protein>
<gene>
    <name type="primary">fmn1</name>
    <name type="ORF">G17A4.020</name>
    <name type="ORF">NCU03970</name>
    <name type="ORF">NCU20237</name>
</gene>
<evidence type="ECO:0000250" key="1"/>
<evidence type="ECO:0000250" key="2">
    <source>
        <dbReference type="UniProtKB" id="Q969G6"/>
    </source>
</evidence>
<evidence type="ECO:0000256" key="3">
    <source>
        <dbReference type="SAM" id="MobiDB-lite"/>
    </source>
</evidence>
<evidence type="ECO:0000305" key="4"/>
<dbReference type="EC" id="2.7.1.26"/>
<dbReference type="EMBL" id="BX908812">
    <property type="protein sequence ID" value="CAF06137.1"/>
    <property type="status" value="ALT_SEQ"/>
    <property type="molecule type" value="Genomic_DNA"/>
</dbReference>
<dbReference type="EMBL" id="CM002241">
    <property type="protein sequence ID" value="EAA28373.1"/>
    <property type="molecule type" value="Genomic_DNA"/>
</dbReference>
<dbReference type="RefSeq" id="XP_957609.1">
    <property type="nucleotide sequence ID" value="XM_952516.2"/>
</dbReference>
<dbReference type="SMR" id="Q6M923"/>
<dbReference type="FunCoup" id="Q6M923">
    <property type="interactions" value="375"/>
</dbReference>
<dbReference type="STRING" id="367110.Q6M923"/>
<dbReference type="PaxDb" id="5141-EFNCRP00000003538"/>
<dbReference type="EnsemblFungi" id="EAA28373">
    <property type="protein sequence ID" value="EAA28373"/>
    <property type="gene ID" value="NCU03970"/>
</dbReference>
<dbReference type="GeneID" id="3873731"/>
<dbReference type="KEGG" id="ncr:NCU03970"/>
<dbReference type="VEuPathDB" id="FungiDB:NCU03970"/>
<dbReference type="HOGENOM" id="CLU_048437_3_2_1"/>
<dbReference type="InParanoid" id="Q6M923"/>
<dbReference type="OMA" id="FDCEVAR"/>
<dbReference type="OrthoDB" id="276388at2759"/>
<dbReference type="UniPathway" id="UPA00276">
    <property type="reaction ID" value="UER00406"/>
</dbReference>
<dbReference type="Proteomes" id="UP000001805">
    <property type="component" value="Chromosome 5, Linkage Group VI"/>
</dbReference>
<dbReference type="GO" id="GO:0005739">
    <property type="term" value="C:mitochondrion"/>
    <property type="evidence" value="ECO:0000318"/>
    <property type="project" value="GO_Central"/>
</dbReference>
<dbReference type="GO" id="GO:0005524">
    <property type="term" value="F:ATP binding"/>
    <property type="evidence" value="ECO:0007669"/>
    <property type="project" value="UniProtKB-KW"/>
</dbReference>
<dbReference type="GO" id="GO:0046872">
    <property type="term" value="F:metal ion binding"/>
    <property type="evidence" value="ECO:0007669"/>
    <property type="project" value="UniProtKB-KW"/>
</dbReference>
<dbReference type="GO" id="GO:0008531">
    <property type="term" value="F:riboflavin kinase activity"/>
    <property type="evidence" value="ECO:0000318"/>
    <property type="project" value="GO_Central"/>
</dbReference>
<dbReference type="GO" id="GO:0009398">
    <property type="term" value="P:FMN biosynthetic process"/>
    <property type="evidence" value="ECO:0000318"/>
    <property type="project" value="GO_Central"/>
</dbReference>
<dbReference type="GO" id="GO:0009231">
    <property type="term" value="P:riboflavin biosynthetic process"/>
    <property type="evidence" value="ECO:0007669"/>
    <property type="project" value="InterPro"/>
</dbReference>
<dbReference type="GO" id="GO:0006771">
    <property type="term" value="P:riboflavin metabolic process"/>
    <property type="evidence" value="ECO:0000318"/>
    <property type="project" value="GO_Central"/>
</dbReference>
<dbReference type="Gene3D" id="2.40.30.30">
    <property type="entry name" value="Riboflavin kinase-like"/>
    <property type="match status" value="1"/>
</dbReference>
<dbReference type="InterPro" id="IPR023468">
    <property type="entry name" value="Riboflavin_kinase"/>
</dbReference>
<dbReference type="InterPro" id="IPR015865">
    <property type="entry name" value="Riboflavin_kinase_bac/euk"/>
</dbReference>
<dbReference type="InterPro" id="IPR023465">
    <property type="entry name" value="Riboflavin_kinase_dom_sf"/>
</dbReference>
<dbReference type="PANTHER" id="PTHR22749:SF6">
    <property type="entry name" value="RIBOFLAVIN KINASE"/>
    <property type="match status" value="1"/>
</dbReference>
<dbReference type="PANTHER" id="PTHR22749">
    <property type="entry name" value="RIBOFLAVIN KINASE/FMN ADENYLYLTRANSFERASE"/>
    <property type="match status" value="1"/>
</dbReference>
<dbReference type="Pfam" id="PF01687">
    <property type="entry name" value="Flavokinase"/>
    <property type="match status" value="1"/>
</dbReference>
<dbReference type="SMART" id="SM00904">
    <property type="entry name" value="Flavokinase"/>
    <property type="match status" value="1"/>
</dbReference>
<dbReference type="SUPFAM" id="SSF82114">
    <property type="entry name" value="Riboflavin kinase-like"/>
    <property type="match status" value="1"/>
</dbReference>
<accession>Q6M923</accession>
<accession>Q7RZ99</accession>
<name>RIFK_NEUCR</name>
<feature type="chain" id="PRO_0000301846" description="Riboflavin kinase">
    <location>
        <begin position="1"/>
        <end position="237"/>
    </location>
</feature>
<feature type="region of interest" description="Disordered" evidence="3">
    <location>
        <begin position="1"/>
        <end position="23"/>
    </location>
</feature>
<feature type="region of interest" description="Disordered" evidence="3">
    <location>
        <begin position="82"/>
        <end position="126"/>
    </location>
</feature>
<feature type="compositionally biased region" description="Low complexity" evidence="3">
    <location>
        <begin position="99"/>
        <end position="115"/>
    </location>
</feature>
<feature type="active site" description="Nucleophile" evidence="1">
    <location>
        <position position="158"/>
    </location>
</feature>
<feature type="binding site" evidence="2">
    <location>
        <position position="46"/>
    </location>
    <ligand>
        <name>Mg(2+)</name>
        <dbReference type="ChEBI" id="CHEBI:18420"/>
    </ligand>
</feature>
<feature type="binding site" evidence="2">
    <location>
        <position position="48"/>
    </location>
    <ligand>
        <name>Mg(2+)</name>
        <dbReference type="ChEBI" id="CHEBI:18420"/>
    </ligand>
</feature>
<organism>
    <name type="scientific">Neurospora crassa (strain ATCC 24698 / 74-OR23-1A / CBS 708.71 / DSM 1257 / FGSC 987)</name>
    <dbReference type="NCBI Taxonomy" id="367110"/>
    <lineage>
        <taxon>Eukaryota</taxon>
        <taxon>Fungi</taxon>
        <taxon>Dikarya</taxon>
        <taxon>Ascomycota</taxon>
        <taxon>Pezizomycotina</taxon>
        <taxon>Sordariomycetes</taxon>
        <taxon>Sordariomycetidae</taxon>
        <taxon>Sordariales</taxon>
        <taxon>Sordariaceae</taxon>
        <taxon>Neurospora</taxon>
    </lineage>
</organism>
<sequence>MSLPNPDNRPLLIGPPTGPEAPFPFRMEGEVISGFGRGSKELGIPTANLPVDDENAWIKNIDSGIYFGWASLKLPASHPNSVLYQKPPTSEPVMMDPVQQQQQQQQQQRNQQQQQEGGVGSAQQEKLVDQETGQWQIYPMVMSIGYNPFYKNTVRSAEVHVLGEFAADFYGVGMRLLITGFIRNEKDYSGLEALIADIHFDCEVARHSLARKGWRVRELGVKEGEEEGELDGSWLVR</sequence>
<keyword id="KW-0067">ATP-binding</keyword>
<keyword id="KW-0285">Flavoprotein</keyword>
<keyword id="KW-0288">FMN</keyword>
<keyword id="KW-0418">Kinase</keyword>
<keyword id="KW-0460">Magnesium</keyword>
<keyword id="KW-0479">Metal-binding</keyword>
<keyword id="KW-0547">Nucleotide-binding</keyword>
<keyword id="KW-1185">Reference proteome</keyword>
<keyword id="KW-0808">Transferase</keyword>
<keyword id="KW-0862">Zinc</keyword>
<reference key="1">
    <citation type="journal article" date="2003" name="Nucleic Acids Res.">
        <title>What's in the genome of a filamentous fungus? Analysis of the Neurospora genome sequence.</title>
        <authorList>
            <person name="Mannhaupt G."/>
            <person name="Montrone C."/>
            <person name="Haase D."/>
            <person name="Mewes H.-W."/>
            <person name="Aign V."/>
            <person name="Hoheisel J.D."/>
            <person name="Fartmann B."/>
            <person name="Nyakatura G."/>
            <person name="Kempken F."/>
            <person name="Maier J."/>
            <person name="Schulte U."/>
        </authorList>
    </citation>
    <scope>NUCLEOTIDE SEQUENCE [LARGE SCALE GENOMIC DNA]</scope>
    <source>
        <strain>ATCC 24698 / 74-OR23-1A / CBS 708.71 / DSM 1257 / FGSC 987</strain>
    </source>
</reference>
<reference key="2">
    <citation type="journal article" date="2003" name="Nature">
        <title>The genome sequence of the filamentous fungus Neurospora crassa.</title>
        <authorList>
            <person name="Galagan J.E."/>
            <person name="Calvo S.E."/>
            <person name="Borkovich K.A."/>
            <person name="Selker E.U."/>
            <person name="Read N.D."/>
            <person name="Jaffe D.B."/>
            <person name="FitzHugh W."/>
            <person name="Ma L.-J."/>
            <person name="Smirnov S."/>
            <person name="Purcell S."/>
            <person name="Rehman B."/>
            <person name="Elkins T."/>
            <person name="Engels R."/>
            <person name="Wang S."/>
            <person name="Nielsen C.B."/>
            <person name="Butler J."/>
            <person name="Endrizzi M."/>
            <person name="Qui D."/>
            <person name="Ianakiev P."/>
            <person name="Bell-Pedersen D."/>
            <person name="Nelson M.A."/>
            <person name="Werner-Washburne M."/>
            <person name="Selitrennikoff C.P."/>
            <person name="Kinsey J.A."/>
            <person name="Braun E.L."/>
            <person name="Zelter A."/>
            <person name="Schulte U."/>
            <person name="Kothe G.O."/>
            <person name="Jedd G."/>
            <person name="Mewes H.-W."/>
            <person name="Staben C."/>
            <person name="Marcotte E."/>
            <person name="Greenberg D."/>
            <person name="Roy A."/>
            <person name="Foley K."/>
            <person name="Naylor J."/>
            <person name="Stange-Thomann N."/>
            <person name="Barrett R."/>
            <person name="Gnerre S."/>
            <person name="Kamal M."/>
            <person name="Kamvysselis M."/>
            <person name="Mauceli E.W."/>
            <person name="Bielke C."/>
            <person name="Rudd S."/>
            <person name="Frishman D."/>
            <person name="Krystofova S."/>
            <person name="Rasmussen C."/>
            <person name="Metzenberg R.L."/>
            <person name="Perkins D.D."/>
            <person name="Kroken S."/>
            <person name="Cogoni C."/>
            <person name="Macino G."/>
            <person name="Catcheside D.E.A."/>
            <person name="Li W."/>
            <person name="Pratt R.J."/>
            <person name="Osmani S.A."/>
            <person name="DeSouza C.P.C."/>
            <person name="Glass N.L."/>
            <person name="Orbach M.J."/>
            <person name="Berglund J.A."/>
            <person name="Voelker R."/>
            <person name="Yarden O."/>
            <person name="Plamann M."/>
            <person name="Seiler S."/>
            <person name="Dunlap J.C."/>
            <person name="Radford A."/>
            <person name="Aramayo R."/>
            <person name="Natvig D.O."/>
            <person name="Alex L.A."/>
            <person name="Mannhaupt G."/>
            <person name="Ebbole D.J."/>
            <person name="Freitag M."/>
            <person name="Paulsen I."/>
            <person name="Sachs M.S."/>
            <person name="Lander E.S."/>
            <person name="Nusbaum C."/>
            <person name="Birren B.W."/>
        </authorList>
    </citation>
    <scope>NUCLEOTIDE SEQUENCE [LARGE SCALE GENOMIC DNA]</scope>
    <source>
        <strain>ATCC 24698 / 74-OR23-1A / CBS 708.71 / DSM 1257 / FGSC 987</strain>
    </source>
</reference>